<evidence type="ECO:0000250" key="1"/>
<evidence type="ECO:0000255" key="2"/>
<evidence type="ECO:0000305" key="3"/>
<feature type="chain" id="PRO_0000421321" description="WAT1-related protein At2g37460">
    <location>
        <begin position="1"/>
        <end position="380"/>
    </location>
</feature>
<feature type="transmembrane region" description="Helical" evidence="2">
    <location>
        <begin position="16"/>
        <end position="36"/>
    </location>
</feature>
<feature type="transmembrane region" description="Helical" evidence="2">
    <location>
        <begin position="45"/>
        <end position="65"/>
    </location>
</feature>
<feature type="transmembrane region" description="Helical" evidence="2">
    <location>
        <begin position="71"/>
        <end position="91"/>
    </location>
</feature>
<feature type="transmembrane region" description="Helical" evidence="2">
    <location>
        <begin position="107"/>
        <end position="127"/>
    </location>
</feature>
<feature type="transmembrane region" description="Helical" evidence="2">
    <location>
        <begin position="142"/>
        <end position="162"/>
    </location>
</feature>
<feature type="transmembrane region" description="Helical" evidence="2">
    <location>
        <begin position="187"/>
        <end position="207"/>
    </location>
</feature>
<feature type="transmembrane region" description="Helical" evidence="2">
    <location>
        <begin position="216"/>
        <end position="236"/>
    </location>
</feature>
<feature type="transmembrane region" description="Helical" evidence="2">
    <location>
        <begin position="254"/>
        <end position="274"/>
    </location>
</feature>
<feature type="transmembrane region" description="Helical" evidence="2">
    <location>
        <begin position="282"/>
        <end position="302"/>
    </location>
</feature>
<feature type="transmembrane region" description="Helical" evidence="2">
    <location>
        <begin position="306"/>
        <end position="326"/>
    </location>
</feature>
<feature type="domain" description="EamA 1">
    <location>
        <begin position="27"/>
        <end position="134"/>
    </location>
</feature>
<feature type="domain" description="EamA 2">
    <location>
        <begin position="196"/>
        <end position="325"/>
    </location>
</feature>
<feature type="sequence conflict" description="In Ref. 4; AAM62850." evidence="3" ref="4">
    <original>E</original>
    <variation>K</variation>
    <location>
        <position position="343"/>
    </location>
</feature>
<organism>
    <name type="scientific">Arabidopsis thaliana</name>
    <name type="common">Mouse-ear cress</name>
    <dbReference type="NCBI Taxonomy" id="3702"/>
    <lineage>
        <taxon>Eukaryota</taxon>
        <taxon>Viridiplantae</taxon>
        <taxon>Streptophyta</taxon>
        <taxon>Embryophyta</taxon>
        <taxon>Tracheophyta</taxon>
        <taxon>Spermatophyta</taxon>
        <taxon>Magnoliopsida</taxon>
        <taxon>eudicotyledons</taxon>
        <taxon>Gunneridae</taxon>
        <taxon>Pentapetalae</taxon>
        <taxon>rosids</taxon>
        <taxon>malvids</taxon>
        <taxon>Brassicales</taxon>
        <taxon>Brassicaceae</taxon>
        <taxon>Camelineae</taxon>
        <taxon>Arabidopsis</taxon>
    </lineage>
</organism>
<reference key="1">
    <citation type="journal article" date="1999" name="Nature">
        <title>Sequence and analysis of chromosome 2 of the plant Arabidopsis thaliana.</title>
        <authorList>
            <person name="Lin X."/>
            <person name="Kaul S."/>
            <person name="Rounsley S.D."/>
            <person name="Shea T.P."/>
            <person name="Benito M.-I."/>
            <person name="Town C.D."/>
            <person name="Fujii C.Y."/>
            <person name="Mason T.M."/>
            <person name="Bowman C.L."/>
            <person name="Barnstead M.E."/>
            <person name="Feldblyum T.V."/>
            <person name="Buell C.R."/>
            <person name="Ketchum K.A."/>
            <person name="Lee J.J."/>
            <person name="Ronning C.M."/>
            <person name="Koo H.L."/>
            <person name="Moffat K.S."/>
            <person name="Cronin L.A."/>
            <person name="Shen M."/>
            <person name="Pai G."/>
            <person name="Van Aken S."/>
            <person name="Umayam L."/>
            <person name="Tallon L.J."/>
            <person name="Gill J.E."/>
            <person name="Adams M.D."/>
            <person name="Carrera A.J."/>
            <person name="Creasy T.H."/>
            <person name="Goodman H.M."/>
            <person name="Somerville C.R."/>
            <person name="Copenhaver G.P."/>
            <person name="Preuss D."/>
            <person name="Nierman W.C."/>
            <person name="White O."/>
            <person name="Eisen J.A."/>
            <person name="Salzberg S.L."/>
            <person name="Fraser C.M."/>
            <person name="Venter J.C."/>
        </authorList>
    </citation>
    <scope>NUCLEOTIDE SEQUENCE [LARGE SCALE GENOMIC DNA]</scope>
    <source>
        <strain>cv. Columbia</strain>
    </source>
</reference>
<reference key="2">
    <citation type="journal article" date="2017" name="Plant J.">
        <title>Araport11: a complete reannotation of the Arabidopsis thaliana reference genome.</title>
        <authorList>
            <person name="Cheng C.Y."/>
            <person name="Krishnakumar V."/>
            <person name="Chan A.P."/>
            <person name="Thibaud-Nissen F."/>
            <person name="Schobel S."/>
            <person name="Town C.D."/>
        </authorList>
    </citation>
    <scope>GENOME REANNOTATION</scope>
    <source>
        <strain>cv. Columbia</strain>
    </source>
</reference>
<reference key="3">
    <citation type="journal article" date="2003" name="Science">
        <title>Empirical analysis of transcriptional activity in the Arabidopsis genome.</title>
        <authorList>
            <person name="Yamada K."/>
            <person name="Lim J."/>
            <person name="Dale J.M."/>
            <person name="Chen H."/>
            <person name="Shinn P."/>
            <person name="Palm C.J."/>
            <person name="Southwick A.M."/>
            <person name="Wu H.C."/>
            <person name="Kim C.J."/>
            <person name="Nguyen M."/>
            <person name="Pham P.K."/>
            <person name="Cheuk R.F."/>
            <person name="Karlin-Newmann G."/>
            <person name="Liu S.X."/>
            <person name="Lam B."/>
            <person name="Sakano H."/>
            <person name="Wu T."/>
            <person name="Yu G."/>
            <person name="Miranda M."/>
            <person name="Quach H.L."/>
            <person name="Tripp M."/>
            <person name="Chang C.H."/>
            <person name="Lee J.M."/>
            <person name="Toriumi M.J."/>
            <person name="Chan M.M."/>
            <person name="Tang C.C."/>
            <person name="Onodera C.S."/>
            <person name="Deng J.M."/>
            <person name="Akiyama K."/>
            <person name="Ansari Y."/>
            <person name="Arakawa T."/>
            <person name="Banh J."/>
            <person name="Banno F."/>
            <person name="Bowser L."/>
            <person name="Brooks S.Y."/>
            <person name="Carninci P."/>
            <person name="Chao Q."/>
            <person name="Choy N."/>
            <person name="Enju A."/>
            <person name="Goldsmith A.D."/>
            <person name="Gurjal M."/>
            <person name="Hansen N.F."/>
            <person name="Hayashizaki Y."/>
            <person name="Johnson-Hopson C."/>
            <person name="Hsuan V.W."/>
            <person name="Iida K."/>
            <person name="Karnes M."/>
            <person name="Khan S."/>
            <person name="Koesema E."/>
            <person name="Ishida J."/>
            <person name="Jiang P.X."/>
            <person name="Jones T."/>
            <person name="Kawai J."/>
            <person name="Kamiya A."/>
            <person name="Meyers C."/>
            <person name="Nakajima M."/>
            <person name="Narusaka M."/>
            <person name="Seki M."/>
            <person name="Sakurai T."/>
            <person name="Satou M."/>
            <person name="Tamse R."/>
            <person name="Vaysberg M."/>
            <person name="Wallender E.K."/>
            <person name="Wong C."/>
            <person name="Yamamura Y."/>
            <person name="Yuan S."/>
            <person name="Shinozaki K."/>
            <person name="Davis R.W."/>
            <person name="Theologis A."/>
            <person name="Ecker J.R."/>
        </authorList>
    </citation>
    <scope>NUCLEOTIDE SEQUENCE [LARGE SCALE MRNA]</scope>
    <source>
        <strain>cv. Columbia</strain>
    </source>
</reference>
<reference key="4">
    <citation type="submission" date="2002-03" db="EMBL/GenBank/DDBJ databases">
        <title>Full-length cDNA from Arabidopsis thaliana.</title>
        <authorList>
            <person name="Brover V.V."/>
            <person name="Troukhan M.E."/>
            <person name="Alexandrov N.A."/>
            <person name="Lu Y.-P."/>
            <person name="Flavell R.B."/>
            <person name="Feldmann K.A."/>
        </authorList>
    </citation>
    <scope>NUCLEOTIDE SEQUENCE [LARGE SCALE MRNA]</scope>
</reference>
<proteinExistence type="evidence at transcript level"/>
<keyword id="KW-0472">Membrane</keyword>
<keyword id="KW-1185">Reference proteome</keyword>
<keyword id="KW-0677">Repeat</keyword>
<keyword id="KW-0812">Transmembrane</keyword>
<keyword id="KW-1133">Transmembrane helix</keyword>
<sequence>MEEVKKRDCMEKARPFISMVVLQVGLAGMDILSKAVLNKGMSNYVLVVYRHAVATIVMAPFAFYFDKKVRPKMTLMIFFKISLLGLLEPVIDQNLYYLGMKYTTATFATAMYNVLPAITFVLAYIFGLERVKLRCIRSTGKVVGTLATVGGAMIMTLVKGPVLDLFWTKGVSAHNTAGTDIHSAIKGAVLVTIGCFSYACFMILQAITLRTYPAELSLTAWICLMGTIEGTAVALVMEKGNPSAWAIGWDTKLLTATYSGIVCSALAYYVGGVVMKTRGPVFVTAFSPLCMIIVAIMSTIIFAEQMYLGRVLGAVVICAGLYLVIWGKGKDYKYNSTLQLDDESAQPKLELSGNGKDNVDHEVITISKQGEQRRTAVETV</sequence>
<accession>Q9ZUS1</accession>
<accession>Q8LE45</accession>
<gene>
    <name type="ordered locus">At2g37460</name>
    <name type="ORF">F3G5.25</name>
</gene>
<protein>
    <recommendedName>
        <fullName>WAT1-related protein At2g37460</fullName>
    </recommendedName>
</protein>
<name>WTR13_ARATH</name>
<comment type="subcellular location">
    <subcellularLocation>
        <location evidence="1">Membrane</location>
        <topology evidence="3">Multi-pass membrane protein</topology>
    </subcellularLocation>
</comment>
<comment type="similarity">
    <text evidence="3">Belongs to the drug/metabolite transporter (DMT) superfamily. Plant drug/metabolite exporter (P-DME) (TC 2.A.7.4) family.</text>
</comment>
<comment type="sequence caution" evidence="3">
    <conflict type="erroneous initiation">
        <sequence resource="EMBL-CDS" id="AAM62850"/>
    </conflict>
    <text>Truncated N-terminus.</text>
</comment>
<dbReference type="EMBL" id="AC005896">
    <property type="protein sequence ID" value="AAC98072.1"/>
    <property type="molecule type" value="Genomic_DNA"/>
</dbReference>
<dbReference type="EMBL" id="CP002685">
    <property type="protein sequence ID" value="AEC09403.1"/>
    <property type="molecule type" value="Genomic_DNA"/>
</dbReference>
<dbReference type="EMBL" id="AY035102">
    <property type="protein sequence ID" value="AAK59607.1"/>
    <property type="molecule type" value="mRNA"/>
</dbReference>
<dbReference type="EMBL" id="AY044320">
    <property type="protein sequence ID" value="AAK73261.1"/>
    <property type="molecule type" value="mRNA"/>
</dbReference>
<dbReference type="EMBL" id="AY063035">
    <property type="protein sequence ID" value="AAL34209.1"/>
    <property type="molecule type" value="mRNA"/>
</dbReference>
<dbReference type="EMBL" id="AY085629">
    <property type="protein sequence ID" value="AAM62850.1"/>
    <property type="status" value="ALT_INIT"/>
    <property type="molecule type" value="mRNA"/>
</dbReference>
<dbReference type="PIR" id="A84793">
    <property type="entry name" value="A84793"/>
</dbReference>
<dbReference type="RefSeq" id="NP_181282.1">
    <property type="nucleotide sequence ID" value="NM_129301.6"/>
</dbReference>
<dbReference type="SMR" id="Q9ZUS1"/>
<dbReference type="FunCoup" id="Q9ZUS1">
    <property type="interactions" value="3"/>
</dbReference>
<dbReference type="STRING" id="3702.Q9ZUS1"/>
<dbReference type="iPTMnet" id="Q9ZUS1"/>
<dbReference type="MetOSite" id="Q9ZUS1"/>
<dbReference type="PaxDb" id="3702-AT2G37460.1"/>
<dbReference type="ProteomicsDB" id="243086"/>
<dbReference type="EnsemblPlants" id="AT2G37460.1">
    <property type="protein sequence ID" value="AT2G37460.1"/>
    <property type="gene ID" value="AT2G37460"/>
</dbReference>
<dbReference type="GeneID" id="818323"/>
<dbReference type="Gramene" id="AT2G37460.1">
    <property type="protein sequence ID" value="AT2G37460.1"/>
    <property type="gene ID" value="AT2G37460"/>
</dbReference>
<dbReference type="KEGG" id="ath:AT2G37460"/>
<dbReference type="Araport" id="AT2G37460"/>
<dbReference type="TAIR" id="AT2G37460">
    <property type="gene designation" value="UMAMIT12"/>
</dbReference>
<dbReference type="eggNOG" id="ENOG502QUF7">
    <property type="taxonomic scope" value="Eukaryota"/>
</dbReference>
<dbReference type="HOGENOM" id="CLU_025359_1_1_1"/>
<dbReference type="InParanoid" id="Q9ZUS1"/>
<dbReference type="OMA" id="FCWACFM"/>
<dbReference type="PhylomeDB" id="Q9ZUS1"/>
<dbReference type="PRO" id="PR:Q9ZUS1"/>
<dbReference type="Proteomes" id="UP000006548">
    <property type="component" value="Chromosome 2"/>
</dbReference>
<dbReference type="ExpressionAtlas" id="Q9ZUS1">
    <property type="expression patterns" value="baseline and differential"/>
</dbReference>
<dbReference type="GO" id="GO:0016020">
    <property type="term" value="C:membrane"/>
    <property type="evidence" value="ECO:0007669"/>
    <property type="project" value="UniProtKB-SubCell"/>
</dbReference>
<dbReference type="GO" id="GO:0022857">
    <property type="term" value="F:transmembrane transporter activity"/>
    <property type="evidence" value="ECO:0007669"/>
    <property type="project" value="InterPro"/>
</dbReference>
<dbReference type="InterPro" id="IPR000620">
    <property type="entry name" value="EamA_dom"/>
</dbReference>
<dbReference type="InterPro" id="IPR030184">
    <property type="entry name" value="WAT1-related"/>
</dbReference>
<dbReference type="PANTHER" id="PTHR31218">
    <property type="entry name" value="WAT1-RELATED PROTEIN"/>
    <property type="match status" value="1"/>
</dbReference>
<dbReference type="Pfam" id="PF00892">
    <property type="entry name" value="EamA"/>
    <property type="match status" value="2"/>
</dbReference>
<dbReference type="SUPFAM" id="SSF103481">
    <property type="entry name" value="Multidrug resistance efflux transporter EmrE"/>
    <property type="match status" value="2"/>
</dbReference>